<evidence type="ECO:0000255" key="1">
    <source>
        <dbReference type="HAMAP-Rule" id="MF_00741"/>
    </source>
</evidence>
<protein>
    <recommendedName>
        <fullName evidence="1">Phosphoribosylformylglycinamidine cyclo-ligase</fullName>
        <ecNumber evidence="1">6.3.3.1</ecNumber>
    </recommendedName>
    <alternativeName>
        <fullName evidence="1">AIR synthase</fullName>
    </alternativeName>
    <alternativeName>
        <fullName evidence="1">AIRS</fullName>
    </alternativeName>
    <alternativeName>
        <fullName evidence="1">Phosphoribosyl-aminoimidazole synthetase</fullName>
    </alternativeName>
</protein>
<sequence>MSTPTPLSYKDAGVDIDAGNALVSNIKAAVKRTRRPEVMGNLGGFGALCEIPTKYKQPVLVSGTDGVGTKLRLAIDYKKHDTVGIDLVAMCVNDLIVQGAEPLFFLDYYATGKLDVETATSVVNGIGEGCFQSGCALIGGETAEMPGMYEGEDYDLAGFCVGVVEKADIIDGSKVAAGDALIALASSGPHSNGYSLVRKVLEVSQADPQQDLNGKPLIEHLLEPTKIYVKSLLKLIEASDVHAMAHITGGGFWENIPRVLPDNCKAVIQGDSWQWPAVFSWLMENGNIAQYEMYRTFNCGVGMIVALPADKVDAALALLAAEGEQAWLIGAIAHREGNEEQVEIL</sequence>
<dbReference type="EC" id="6.3.3.1" evidence="1"/>
<dbReference type="EMBL" id="CP000681">
    <property type="protein sequence ID" value="ABP75321.1"/>
    <property type="molecule type" value="Genomic_DNA"/>
</dbReference>
<dbReference type="SMR" id="A4Y5T8"/>
<dbReference type="STRING" id="319224.Sputcn32_1596"/>
<dbReference type="KEGG" id="spc:Sputcn32_1596"/>
<dbReference type="eggNOG" id="COG0150">
    <property type="taxonomic scope" value="Bacteria"/>
</dbReference>
<dbReference type="HOGENOM" id="CLU_047116_0_0_6"/>
<dbReference type="UniPathway" id="UPA00074">
    <property type="reaction ID" value="UER00129"/>
</dbReference>
<dbReference type="GO" id="GO:0005829">
    <property type="term" value="C:cytosol"/>
    <property type="evidence" value="ECO:0007669"/>
    <property type="project" value="TreeGrafter"/>
</dbReference>
<dbReference type="GO" id="GO:0005524">
    <property type="term" value="F:ATP binding"/>
    <property type="evidence" value="ECO:0007669"/>
    <property type="project" value="UniProtKB-KW"/>
</dbReference>
<dbReference type="GO" id="GO:0004637">
    <property type="term" value="F:phosphoribosylamine-glycine ligase activity"/>
    <property type="evidence" value="ECO:0007669"/>
    <property type="project" value="TreeGrafter"/>
</dbReference>
<dbReference type="GO" id="GO:0004641">
    <property type="term" value="F:phosphoribosylformylglycinamidine cyclo-ligase activity"/>
    <property type="evidence" value="ECO:0007669"/>
    <property type="project" value="UniProtKB-UniRule"/>
</dbReference>
<dbReference type="GO" id="GO:0006189">
    <property type="term" value="P:'de novo' IMP biosynthetic process"/>
    <property type="evidence" value="ECO:0007669"/>
    <property type="project" value="UniProtKB-UniRule"/>
</dbReference>
<dbReference type="GO" id="GO:0046084">
    <property type="term" value="P:adenine biosynthetic process"/>
    <property type="evidence" value="ECO:0007669"/>
    <property type="project" value="TreeGrafter"/>
</dbReference>
<dbReference type="CDD" id="cd02196">
    <property type="entry name" value="PurM"/>
    <property type="match status" value="1"/>
</dbReference>
<dbReference type="FunFam" id="3.30.1330.10:FF:000001">
    <property type="entry name" value="Phosphoribosylformylglycinamidine cyclo-ligase"/>
    <property type="match status" value="1"/>
</dbReference>
<dbReference type="FunFam" id="3.90.650.10:FF:000001">
    <property type="entry name" value="Phosphoribosylformylglycinamidine cyclo-ligase"/>
    <property type="match status" value="1"/>
</dbReference>
<dbReference type="Gene3D" id="3.90.650.10">
    <property type="entry name" value="PurM-like C-terminal domain"/>
    <property type="match status" value="1"/>
</dbReference>
<dbReference type="Gene3D" id="3.30.1330.10">
    <property type="entry name" value="PurM-like, N-terminal domain"/>
    <property type="match status" value="1"/>
</dbReference>
<dbReference type="HAMAP" id="MF_00741">
    <property type="entry name" value="AIRS"/>
    <property type="match status" value="1"/>
</dbReference>
<dbReference type="InterPro" id="IPR010918">
    <property type="entry name" value="PurM-like_C_dom"/>
</dbReference>
<dbReference type="InterPro" id="IPR036676">
    <property type="entry name" value="PurM-like_C_sf"/>
</dbReference>
<dbReference type="InterPro" id="IPR016188">
    <property type="entry name" value="PurM-like_N"/>
</dbReference>
<dbReference type="InterPro" id="IPR036921">
    <property type="entry name" value="PurM-like_N_sf"/>
</dbReference>
<dbReference type="InterPro" id="IPR004733">
    <property type="entry name" value="PurM_cligase"/>
</dbReference>
<dbReference type="NCBIfam" id="TIGR00878">
    <property type="entry name" value="purM"/>
    <property type="match status" value="1"/>
</dbReference>
<dbReference type="PANTHER" id="PTHR10520:SF12">
    <property type="entry name" value="TRIFUNCTIONAL PURINE BIOSYNTHETIC PROTEIN ADENOSINE-3"/>
    <property type="match status" value="1"/>
</dbReference>
<dbReference type="PANTHER" id="PTHR10520">
    <property type="entry name" value="TRIFUNCTIONAL PURINE BIOSYNTHETIC PROTEIN ADENOSINE-3-RELATED"/>
    <property type="match status" value="1"/>
</dbReference>
<dbReference type="Pfam" id="PF00586">
    <property type="entry name" value="AIRS"/>
    <property type="match status" value="1"/>
</dbReference>
<dbReference type="Pfam" id="PF02769">
    <property type="entry name" value="AIRS_C"/>
    <property type="match status" value="1"/>
</dbReference>
<dbReference type="SUPFAM" id="SSF56042">
    <property type="entry name" value="PurM C-terminal domain-like"/>
    <property type="match status" value="1"/>
</dbReference>
<dbReference type="SUPFAM" id="SSF55326">
    <property type="entry name" value="PurM N-terminal domain-like"/>
    <property type="match status" value="1"/>
</dbReference>
<gene>
    <name evidence="1" type="primary">purM</name>
    <name type="ordered locus">Sputcn32_1596</name>
</gene>
<organism>
    <name type="scientific">Shewanella putrefaciens (strain CN-32 / ATCC BAA-453)</name>
    <dbReference type="NCBI Taxonomy" id="319224"/>
    <lineage>
        <taxon>Bacteria</taxon>
        <taxon>Pseudomonadati</taxon>
        <taxon>Pseudomonadota</taxon>
        <taxon>Gammaproteobacteria</taxon>
        <taxon>Alteromonadales</taxon>
        <taxon>Shewanellaceae</taxon>
        <taxon>Shewanella</taxon>
    </lineage>
</organism>
<comment type="catalytic activity">
    <reaction evidence="1">
        <text>2-formamido-N(1)-(5-O-phospho-beta-D-ribosyl)acetamidine + ATP = 5-amino-1-(5-phospho-beta-D-ribosyl)imidazole + ADP + phosphate + H(+)</text>
        <dbReference type="Rhea" id="RHEA:23032"/>
        <dbReference type="ChEBI" id="CHEBI:15378"/>
        <dbReference type="ChEBI" id="CHEBI:30616"/>
        <dbReference type="ChEBI" id="CHEBI:43474"/>
        <dbReference type="ChEBI" id="CHEBI:137981"/>
        <dbReference type="ChEBI" id="CHEBI:147287"/>
        <dbReference type="ChEBI" id="CHEBI:456216"/>
        <dbReference type="EC" id="6.3.3.1"/>
    </reaction>
</comment>
<comment type="pathway">
    <text evidence="1">Purine metabolism; IMP biosynthesis via de novo pathway; 5-amino-1-(5-phospho-D-ribosyl)imidazole from N(2)-formyl-N(1)-(5-phospho-D-ribosyl)glycinamide: step 2/2.</text>
</comment>
<comment type="subcellular location">
    <subcellularLocation>
        <location evidence="1">Cytoplasm</location>
    </subcellularLocation>
</comment>
<comment type="similarity">
    <text evidence="1">Belongs to the AIR synthase family.</text>
</comment>
<reference key="1">
    <citation type="submission" date="2007-04" db="EMBL/GenBank/DDBJ databases">
        <title>Complete sequence of Shewanella putrefaciens CN-32.</title>
        <authorList>
            <consortium name="US DOE Joint Genome Institute"/>
            <person name="Copeland A."/>
            <person name="Lucas S."/>
            <person name="Lapidus A."/>
            <person name="Barry K."/>
            <person name="Detter J.C."/>
            <person name="Glavina del Rio T."/>
            <person name="Hammon N."/>
            <person name="Israni S."/>
            <person name="Dalin E."/>
            <person name="Tice H."/>
            <person name="Pitluck S."/>
            <person name="Chain P."/>
            <person name="Malfatti S."/>
            <person name="Shin M."/>
            <person name="Vergez L."/>
            <person name="Schmutz J."/>
            <person name="Larimer F."/>
            <person name="Land M."/>
            <person name="Hauser L."/>
            <person name="Kyrpides N."/>
            <person name="Mikhailova N."/>
            <person name="Romine M.F."/>
            <person name="Fredrickson J."/>
            <person name="Tiedje J."/>
            <person name="Richardson P."/>
        </authorList>
    </citation>
    <scope>NUCLEOTIDE SEQUENCE [LARGE SCALE GENOMIC DNA]</scope>
    <source>
        <strain>CN-32 / ATCC BAA-453</strain>
    </source>
</reference>
<name>PUR5_SHEPC</name>
<accession>A4Y5T8</accession>
<feature type="chain" id="PRO_1000046467" description="Phosphoribosylformylglycinamidine cyclo-ligase">
    <location>
        <begin position="1"/>
        <end position="345"/>
    </location>
</feature>
<keyword id="KW-0067">ATP-binding</keyword>
<keyword id="KW-0963">Cytoplasm</keyword>
<keyword id="KW-0436">Ligase</keyword>
<keyword id="KW-0547">Nucleotide-binding</keyword>
<keyword id="KW-0658">Purine biosynthesis</keyword>
<proteinExistence type="inferred from homology"/>